<organism>
    <name type="scientific">Homo sapiens</name>
    <name type="common">Human</name>
    <dbReference type="NCBI Taxonomy" id="9606"/>
    <lineage>
        <taxon>Eukaryota</taxon>
        <taxon>Metazoa</taxon>
        <taxon>Chordata</taxon>
        <taxon>Craniata</taxon>
        <taxon>Vertebrata</taxon>
        <taxon>Euteleostomi</taxon>
        <taxon>Mammalia</taxon>
        <taxon>Eutheria</taxon>
        <taxon>Euarchontoglires</taxon>
        <taxon>Primates</taxon>
        <taxon>Haplorrhini</taxon>
        <taxon>Catarrhini</taxon>
        <taxon>Hominidae</taxon>
        <taxon>Homo</taxon>
    </lineage>
</organism>
<sequence length="229" mass="24747">MAPHDPGSLTTLVPWAAALLLALGVERALALPEICTQCPGSVQNLSKVAFYCKTTRELMLHARCCLNQKGTILGLDLQNCSLEDPGPNFHQAHTTVIIDLQANPLKGDLANTFRGFTQLQTLILPQHVNCPGGINAWNTITSYIDNQICQGQKNLCNNTGDPEMCPENGSCVPDGPGLLQCVCADGFHGYKCMRQGSFSLLMFFGILGATTLSVSILLWATQRRKAKTS</sequence>
<comment type="function">
    <text evidence="6 7">Promotes osteoblast cell differentiation and terminal mineralization. Plays a role in inducing the cell cycle arrest via inhibiting CCND1 expression in all-trans-retinoic acid (ATRA) signal pathway. In osteoclasts, forms a transporter complex with ATRAID for nitrogen-containing-bisphophonates (N-BPs) required for releasing N-BP molecules that have trafficked to lysosomes through fluid-phase endocytosis into the cytosol (PubMed:29745899).</text>
</comment>
<comment type="subunit">
    <text evidence="6 7">Interacts with NELL1; the interaction promotes osteoblastic differentiation and mineralization. Interacts with SLC37A3; the interaction is direct and both proteins are mutually dependent for their stability (PubMed:29745899).</text>
</comment>
<comment type="interaction">
    <interactant intactId="EBI-723802">
        <id>Q6UW56</id>
    </interactant>
    <interactant intactId="EBI-947754">
        <id>Q92832</id>
        <label>NELL1</label>
    </interactant>
    <organismsDiffer>false</organismsDiffer>
    <experiments>4</experiments>
</comment>
<comment type="interaction">
    <interactant intactId="EBI-723802">
        <id>Q6UW56</id>
    </interactant>
    <interactant intactId="EBI-77848">
        <id>Q9Y5X1</id>
        <label>SNX9</label>
    </interactant>
    <organismsDiffer>false</organismsDiffer>
    <experiments>2</experiments>
</comment>
<comment type="interaction">
    <interactant intactId="EBI-12830308">
        <id>Q6UW56-2</id>
    </interactant>
    <interactant intactId="EBI-711788">
        <id>Q00013</id>
        <label>MPP1</label>
    </interactant>
    <organismsDiffer>false</organismsDiffer>
    <experiments>3</experiments>
</comment>
<comment type="subcellular location">
    <subcellularLocation>
        <location evidence="6">Nucleus envelope</location>
    </subcellularLocation>
    <subcellularLocation>
        <location evidence="5">Cell membrane</location>
        <topology evidence="5">Single-pass membrane protein</topology>
    </subcellularLocation>
    <subcellularLocation>
        <location evidence="7">Lysosome membrane</location>
        <topology evidence="1">Multi-pass membrane protein</topology>
    </subcellularLocation>
    <text>Colocalizes with NELL1 on the nuclear envelope and the perinuclear region (PubMed:21723284).</text>
</comment>
<comment type="alternative products">
    <event type="alternative promoter"/>
    <event type="alternative splicing"/>
    <isoform>
        <id>Q6UW56-1</id>
        <name>1</name>
        <sequence type="displayed"/>
    </isoform>
    <isoform>
        <id>Q6UW56-2</id>
        <name>2</name>
        <sequence type="described" ref="VSP_014108"/>
    </isoform>
    <isoform>
        <id>Q6UW56-3</id>
        <name>3</name>
        <sequence type="described" ref="VSP_037521"/>
    </isoform>
</comment>
<comment type="tissue specificity">
    <text evidence="3">Weakly expressed in hematopoietic cell lines.</text>
</comment>
<comment type="induction">
    <text evidence="5">Up-regulated by all-trans-retinoic acid (ATRA) in several tumor cell lines.</text>
</comment>
<comment type="miscellaneous">
    <molecule>Isoform 2</molecule>
    <text evidence="14">Produced by alternative splicing of isoform 1.</text>
</comment>
<comment type="miscellaneous">
    <molecule>Isoform 3</molecule>
    <text evidence="14">Produced by alternative promoter usage.</text>
</comment>
<comment type="sequence caution" evidence="14">
    <conflict type="frameshift">
        <sequence resource="EMBL-CDS" id="AAD27770"/>
    </conflict>
</comment>
<comment type="sequence caution" evidence="14">
    <conflict type="erroneous initiation">
        <sequence resource="EMBL-CDS" id="AAD31317"/>
    </conflict>
    <text>Extended N-terminus.</text>
</comment>
<comment type="sequence caution" evidence="14">
    <conflict type="frameshift">
        <sequence resource="EMBL-CDS" id="AAD31317"/>
    </conflict>
</comment>
<comment type="sequence caution" evidence="14">
    <conflict type="erroneous initiation">
        <sequence resource="EMBL-CDS" id="AAH02846"/>
    </conflict>
    <text>Extended N-terminus.</text>
</comment>
<comment type="sequence caution" evidence="14">
    <conflict type="erroneous initiation">
        <sequence resource="EMBL-CDS" id="AAH11006"/>
    </conflict>
    <text>Extended N-terminus.</text>
</comment>
<comment type="sequence caution" evidence="14">
    <conflict type="erroneous initiation">
        <sequence resource="EMBL-CDS" id="AAH35850"/>
    </conflict>
    <text>Truncated N-terminus.</text>
</comment>
<comment type="sequence caution" evidence="14">
    <conflict type="erroneous gene model prediction">
        <sequence resource="EMBL-CDS" id="AAX93173"/>
    </conflict>
</comment>
<name>ARAID_HUMAN</name>
<proteinExistence type="evidence at protein level"/>
<keyword id="KW-0877">Alternative promoter usage</keyword>
<keyword id="KW-0025">Alternative splicing</keyword>
<keyword id="KW-1003">Cell membrane</keyword>
<keyword id="KW-0221">Differentiation</keyword>
<keyword id="KW-0903">Direct protein sequencing</keyword>
<keyword id="KW-1015">Disulfide bond</keyword>
<keyword id="KW-0245">EGF-like domain</keyword>
<keyword id="KW-0325">Glycoprotein</keyword>
<keyword id="KW-0458">Lysosome</keyword>
<keyword id="KW-0472">Membrane</keyword>
<keyword id="KW-0539">Nucleus</keyword>
<keyword id="KW-1267">Proteomics identification</keyword>
<keyword id="KW-1185">Reference proteome</keyword>
<keyword id="KW-0732">Signal</keyword>
<keyword id="KW-0812">Transmembrane</keyword>
<keyword id="KW-1133">Transmembrane helix</keyword>
<evidence type="ECO:0000255" key="1"/>
<evidence type="ECO:0000255" key="2">
    <source>
        <dbReference type="PROSITE-ProRule" id="PRU00076"/>
    </source>
</evidence>
<evidence type="ECO:0000269" key="3">
    <source>
    </source>
</evidence>
<evidence type="ECO:0000269" key="4">
    <source>
    </source>
</evidence>
<evidence type="ECO:0000269" key="5">
    <source>
    </source>
</evidence>
<evidence type="ECO:0000269" key="6">
    <source>
    </source>
</evidence>
<evidence type="ECO:0000269" key="7">
    <source>
    </source>
</evidence>
<evidence type="ECO:0000269" key="8">
    <source ref="1"/>
</evidence>
<evidence type="ECO:0000303" key="9">
    <source>
    </source>
</evidence>
<evidence type="ECO:0000303" key="10">
    <source>
    </source>
</evidence>
<evidence type="ECO:0000303" key="11">
    <source>
    </source>
</evidence>
<evidence type="ECO:0000303" key="12">
    <source ref="3"/>
</evidence>
<evidence type="ECO:0000303" key="13">
    <source ref="7"/>
</evidence>
<evidence type="ECO:0000305" key="14"/>
<evidence type="ECO:0000312" key="15">
    <source>
        <dbReference type="HGNC" id="HGNC:24090"/>
    </source>
</evidence>
<gene>
    <name evidence="15" type="primary">ATRAID</name>
    <name type="synonym">APR3</name>
    <name type="synonym">C2orf28</name>
    <name type="ORF">HSPC013</name>
    <name type="ORF">UNQ214/PRO240</name>
</gene>
<dbReference type="EMBL" id="AB009017">
    <property type="protein sequence ID" value="BAF80618.1"/>
    <property type="molecule type" value="mRNA"/>
</dbReference>
<dbReference type="EMBL" id="AF144055">
    <property type="protein sequence ID" value="AAD31317.2"/>
    <property type="status" value="ALT_SEQ"/>
    <property type="molecule type" value="mRNA"/>
</dbReference>
<dbReference type="EMBL" id="AF275744">
    <property type="protein sequence ID" value="AAK69412.1"/>
    <property type="molecule type" value="mRNA"/>
</dbReference>
<dbReference type="EMBL" id="AF077037">
    <property type="protein sequence ID" value="AAD27770.1"/>
    <property type="status" value="ALT_FRAME"/>
    <property type="molecule type" value="mRNA"/>
</dbReference>
<dbReference type="EMBL" id="AY358968">
    <property type="protein sequence ID" value="AAQ89327.1"/>
    <property type="molecule type" value="mRNA"/>
</dbReference>
<dbReference type="EMBL" id="AK291894">
    <property type="protein sequence ID" value="BAF84583.1"/>
    <property type="molecule type" value="mRNA"/>
</dbReference>
<dbReference type="EMBL" id="CR600041">
    <property type="status" value="NOT_ANNOTATED_CDS"/>
    <property type="molecule type" value="mRNA"/>
</dbReference>
<dbReference type="EMBL" id="AC013403">
    <property type="protein sequence ID" value="AAX93173.1"/>
    <property type="status" value="ALT_SEQ"/>
    <property type="molecule type" value="Genomic_DNA"/>
</dbReference>
<dbReference type="EMBL" id="CH471053">
    <property type="protein sequence ID" value="EAX00617.1"/>
    <property type="molecule type" value="Genomic_DNA"/>
</dbReference>
<dbReference type="EMBL" id="BC002846">
    <property type="protein sequence ID" value="AAH02846.2"/>
    <property type="status" value="ALT_INIT"/>
    <property type="molecule type" value="mRNA"/>
</dbReference>
<dbReference type="EMBL" id="BC011006">
    <property type="protein sequence ID" value="AAH11006.3"/>
    <property type="status" value="ALT_INIT"/>
    <property type="molecule type" value="mRNA"/>
</dbReference>
<dbReference type="EMBL" id="BC021237">
    <property type="protein sequence ID" value="AAH21237.1"/>
    <property type="molecule type" value="mRNA"/>
</dbReference>
<dbReference type="EMBL" id="BC035850">
    <property type="protein sequence ID" value="AAH35850.1"/>
    <property type="status" value="ALT_INIT"/>
    <property type="molecule type" value="mRNA"/>
</dbReference>
<dbReference type="CCDS" id="CCDS46243.1">
    <molecule id="Q6UW56-2"/>
</dbReference>
<dbReference type="CCDS" id="CCDS62877.1">
    <molecule id="Q6UW56-1"/>
</dbReference>
<dbReference type="RefSeq" id="NP_001164266.1">
    <molecule id="Q6UW56-1"/>
    <property type="nucleotide sequence ID" value="NM_001170795.4"/>
</dbReference>
<dbReference type="RefSeq" id="NP_057169.2">
    <molecule id="Q6UW56-2"/>
    <property type="nucleotide sequence ID" value="NM_016085.4"/>
</dbReference>
<dbReference type="RefSeq" id="NP_542159.3">
    <property type="nucleotide sequence ID" value="NM_080592.3"/>
</dbReference>
<dbReference type="BioGRID" id="119507">
    <property type="interactions" value="10"/>
</dbReference>
<dbReference type="FunCoup" id="Q6UW56">
    <property type="interactions" value="555"/>
</dbReference>
<dbReference type="IntAct" id="Q6UW56">
    <property type="interactions" value="12"/>
</dbReference>
<dbReference type="MINT" id="Q6UW56"/>
<dbReference type="STRING" id="9606.ENSP00000484228"/>
<dbReference type="TCDB" id="9.B.87.5.1">
    <property type="family name" value="the selenoprotein p receptor (selp-receptor) family"/>
</dbReference>
<dbReference type="GlyConnect" id="1000">
    <property type="glycosylation" value="4 N-Linked glycans (2 sites)"/>
</dbReference>
<dbReference type="GlyCosmos" id="Q6UW56">
    <property type="glycosylation" value="4 sites, 4 glycans"/>
</dbReference>
<dbReference type="GlyGen" id="Q6UW56">
    <property type="glycosylation" value="6 sites, 7 N-linked glycans (4 sites), 1 O-linked glycan (2 sites)"/>
</dbReference>
<dbReference type="iPTMnet" id="Q6UW56"/>
<dbReference type="PhosphoSitePlus" id="Q6UW56"/>
<dbReference type="SwissPalm" id="Q6UW56"/>
<dbReference type="BioMuta" id="ATRAID"/>
<dbReference type="DMDM" id="239938597"/>
<dbReference type="jPOST" id="Q6UW56"/>
<dbReference type="MassIVE" id="Q6UW56"/>
<dbReference type="PaxDb" id="9606-ENSP00000484228"/>
<dbReference type="PeptideAtlas" id="Q6UW56"/>
<dbReference type="ProteomicsDB" id="67447">
    <molecule id="Q6UW56-1"/>
</dbReference>
<dbReference type="ProteomicsDB" id="67448">
    <molecule id="Q6UW56-2"/>
</dbReference>
<dbReference type="ProteomicsDB" id="67449">
    <molecule id="Q6UW56-3"/>
</dbReference>
<dbReference type="Pumba" id="Q6UW56"/>
<dbReference type="Antibodypedia" id="28263">
    <property type="antibodies" value="98 antibodies from 23 providers"/>
</dbReference>
<dbReference type="DNASU" id="51374"/>
<dbReference type="Ensembl" id="ENST00000380171.9">
    <molecule id="Q6UW56-1"/>
    <property type="protein sequence ID" value="ENSP00000369518.4"/>
    <property type="gene ID" value="ENSG00000138085.18"/>
</dbReference>
<dbReference type="Ensembl" id="ENST00000405489.7">
    <molecule id="Q6UW56-2"/>
    <property type="protein sequence ID" value="ENSP00000384033.3"/>
    <property type="gene ID" value="ENSG00000138085.18"/>
</dbReference>
<dbReference type="GeneID" id="51374"/>
<dbReference type="KEGG" id="hsa:51374"/>
<dbReference type="MANE-Select" id="ENST00000380171.9">
    <property type="protein sequence ID" value="ENSP00000369518.4"/>
    <property type="RefSeq nucleotide sequence ID" value="NM_001170795.4"/>
    <property type="RefSeq protein sequence ID" value="NP_001164266.1"/>
</dbReference>
<dbReference type="UCSC" id="uc002rjf.5">
    <molecule id="Q6UW56-1"/>
    <property type="organism name" value="human"/>
</dbReference>
<dbReference type="AGR" id="HGNC:24090"/>
<dbReference type="CTD" id="51374"/>
<dbReference type="DisGeNET" id="51374"/>
<dbReference type="GeneCards" id="ATRAID"/>
<dbReference type="HGNC" id="HGNC:24090">
    <property type="gene designation" value="ATRAID"/>
</dbReference>
<dbReference type="HPA" id="ENSG00000138085">
    <property type="expression patterns" value="Low tissue specificity"/>
</dbReference>
<dbReference type="MIM" id="619682">
    <property type="type" value="gene"/>
</dbReference>
<dbReference type="neXtProt" id="NX_Q6UW56"/>
<dbReference type="OpenTargets" id="ENSG00000138085"/>
<dbReference type="PharmGKB" id="PA134964154"/>
<dbReference type="VEuPathDB" id="HostDB:ENSG00000138085"/>
<dbReference type="eggNOG" id="ENOG502S1YR">
    <property type="taxonomic scope" value="Eukaryota"/>
</dbReference>
<dbReference type="GeneTree" id="ENSGT00390000017252"/>
<dbReference type="HOGENOM" id="CLU_086391_0_0_1"/>
<dbReference type="InParanoid" id="Q6UW56"/>
<dbReference type="OMA" id="KMAPHGP"/>
<dbReference type="OrthoDB" id="9989713at2759"/>
<dbReference type="PAN-GO" id="Q6UW56">
    <property type="GO annotations" value="2 GO annotations based on evolutionary models"/>
</dbReference>
<dbReference type="PhylomeDB" id="Q6UW56"/>
<dbReference type="TreeFam" id="TF335766"/>
<dbReference type="PathwayCommons" id="Q6UW56"/>
<dbReference type="SignaLink" id="Q6UW56"/>
<dbReference type="BioGRID-ORCS" id="51374">
    <property type="hits" value="9 hits in 1159 CRISPR screens"/>
</dbReference>
<dbReference type="ChiTaRS" id="ATRAID">
    <property type="organism name" value="human"/>
</dbReference>
<dbReference type="GeneWiki" id="C2orf28"/>
<dbReference type="GenomeRNAi" id="51374"/>
<dbReference type="Pharos" id="Q6UW56">
    <property type="development level" value="Tbio"/>
</dbReference>
<dbReference type="PRO" id="PR:Q6UW56"/>
<dbReference type="Proteomes" id="UP000005640">
    <property type="component" value="Chromosome 2"/>
</dbReference>
<dbReference type="RNAct" id="Q6UW56">
    <property type="molecule type" value="protein"/>
</dbReference>
<dbReference type="Bgee" id="ENSG00000138085">
    <property type="expression patterns" value="Expressed in type B pancreatic cell and 201 other cell types or tissues"/>
</dbReference>
<dbReference type="ExpressionAtlas" id="Q6UW56">
    <property type="expression patterns" value="baseline and differential"/>
</dbReference>
<dbReference type="GO" id="GO:0043231">
    <property type="term" value="C:intracellular membrane-bounded organelle"/>
    <property type="evidence" value="ECO:0000318"/>
    <property type="project" value="GO_Central"/>
</dbReference>
<dbReference type="GO" id="GO:0005765">
    <property type="term" value="C:lysosomal membrane"/>
    <property type="evidence" value="ECO:0000314"/>
    <property type="project" value="UniProtKB"/>
</dbReference>
<dbReference type="GO" id="GO:0005635">
    <property type="term" value="C:nuclear envelope"/>
    <property type="evidence" value="ECO:0000314"/>
    <property type="project" value="UniProtKB"/>
</dbReference>
<dbReference type="GO" id="GO:0048471">
    <property type="term" value="C:perinuclear region of cytoplasm"/>
    <property type="evidence" value="ECO:0000314"/>
    <property type="project" value="UniProtKB"/>
</dbReference>
<dbReference type="GO" id="GO:0005886">
    <property type="term" value="C:plasma membrane"/>
    <property type="evidence" value="ECO:0007669"/>
    <property type="project" value="UniProtKB-SubCell"/>
</dbReference>
<dbReference type="GO" id="GO:0042910">
    <property type="term" value="F:xenobiotic transmembrane transporter activity"/>
    <property type="evidence" value="ECO:0000314"/>
    <property type="project" value="UniProtKB"/>
</dbReference>
<dbReference type="GO" id="GO:0030154">
    <property type="term" value="P:cell differentiation"/>
    <property type="evidence" value="ECO:0007669"/>
    <property type="project" value="UniProtKB-KW"/>
</dbReference>
<dbReference type="GO" id="GO:0033689">
    <property type="term" value="P:negative regulation of osteoblast proliferation"/>
    <property type="evidence" value="ECO:0000314"/>
    <property type="project" value="UniProtKB"/>
</dbReference>
<dbReference type="GO" id="GO:0042177">
    <property type="term" value="P:negative regulation of protein catabolic process"/>
    <property type="evidence" value="ECO:0000314"/>
    <property type="project" value="UniProtKB"/>
</dbReference>
<dbReference type="GO" id="GO:0030501">
    <property type="term" value="P:positive regulation of bone mineralization"/>
    <property type="evidence" value="ECO:0000314"/>
    <property type="project" value="UniProtKB"/>
</dbReference>
<dbReference type="GO" id="GO:0045669">
    <property type="term" value="P:positive regulation of osteoblast differentiation"/>
    <property type="evidence" value="ECO:0000314"/>
    <property type="project" value="UniProtKB"/>
</dbReference>
<dbReference type="GO" id="GO:0010468">
    <property type="term" value="P:regulation of gene expression"/>
    <property type="evidence" value="ECO:0000314"/>
    <property type="project" value="UniProtKB"/>
</dbReference>
<dbReference type="GO" id="GO:0006855">
    <property type="term" value="P:xenobiotic transmembrane transport"/>
    <property type="evidence" value="ECO:0000314"/>
    <property type="project" value="UniProtKB"/>
</dbReference>
<dbReference type="InterPro" id="IPR042350">
    <property type="entry name" value="ATRAID"/>
</dbReference>
<dbReference type="InterPro" id="IPR000742">
    <property type="entry name" value="EGF-like_dom"/>
</dbReference>
<dbReference type="PANTHER" id="PTHR15926">
    <property type="entry name" value="ALL-TRANS RETINOIC ACID-INDUCED DIFFERENTIATION FACTOR"/>
    <property type="match status" value="1"/>
</dbReference>
<dbReference type="PANTHER" id="PTHR15926:SF1">
    <property type="entry name" value="ALL-TRANS RETINOIC ACID-INDUCED DIFFERENTIATION FACTOR"/>
    <property type="match status" value="1"/>
</dbReference>
<dbReference type="PROSITE" id="PS00022">
    <property type="entry name" value="EGF_1"/>
    <property type="match status" value="1"/>
</dbReference>
<dbReference type="PROSITE" id="PS01186">
    <property type="entry name" value="EGF_2"/>
    <property type="match status" value="1"/>
</dbReference>
<dbReference type="PROSITE" id="PS50026">
    <property type="entry name" value="EGF_3"/>
    <property type="match status" value="1"/>
</dbReference>
<feature type="signal peptide" evidence="4">
    <location>
        <begin position="1"/>
        <end position="30"/>
    </location>
</feature>
<feature type="chain" id="PRO_0000020752" description="All-trans retinoic acid-induced differentiation factor">
    <location>
        <begin position="31"/>
        <end position="229"/>
    </location>
</feature>
<feature type="topological domain" description="Extracellular" evidence="1">
    <location>
        <begin position="31"/>
        <end position="199"/>
    </location>
</feature>
<feature type="transmembrane region" description="Helical" evidence="1">
    <location>
        <begin position="200"/>
        <end position="220"/>
    </location>
</feature>
<feature type="topological domain" description="Cytoplasmic" evidence="1">
    <location>
        <begin position="221"/>
        <end position="229"/>
    </location>
</feature>
<feature type="domain" description="EGF-like" evidence="2">
    <location>
        <begin position="152"/>
        <end position="193"/>
    </location>
</feature>
<feature type="glycosylation site" description="N-linked (GlcNAc...) asparagine" evidence="1">
    <location>
        <position position="44"/>
    </location>
</feature>
<feature type="glycosylation site" description="N-linked (GlcNAc...) asparagine" evidence="1">
    <location>
        <position position="79"/>
    </location>
</feature>
<feature type="glycosylation site" description="N-linked (GlcNAc...) asparagine" evidence="1">
    <location>
        <position position="157"/>
    </location>
</feature>
<feature type="glycosylation site" description="N-linked (GlcNAc...) asparagine" evidence="1">
    <location>
        <position position="168"/>
    </location>
</feature>
<feature type="disulfide bond" evidence="2">
    <location>
        <begin position="156"/>
        <end position="171"/>
    </location>
</feature>
<feature type="disulfide bond" evidence="2">
    <location>
        <begin position="165"/>
        <end position="181"/>
    </location>
</feature>
<feature type="disulfide bond" evidence="2">
    <location>
        <begin position="183"/>
        <end position="192"/>
    </location>
</feature>
<feature type="splice variant" id="VSP_014108" description="In isoform 2." evidence="9 10 11 12">
    <location>
        <begin position="1"/>
        <end position="58"/>
    </location>
</feature>
<feature type="splice variant" id="VSP_037521" description="In isoform 3." evidence="13">
    <original>M</original>
    <variation>MKTSAELHEQEKPPSSPRATGPGRLGHARGRGPDALRGGAAGPGRASSGAPRERKM</variation>
    <location>
        <position position="1"/>
    </location>
</feature>
<feature type="sequence variant" id="VAR_057991" description="In dbSNP:rs7437." evidence="8">
    <original>A</original>
    <variation>S</variation>
    <location>
        <position position="209"/>
    </location>
</feature>
<feature type="sequence conflict" description="In Ref. 1; BAF80618, 4; AAD27770, 5; AAQ89327 and 10; AAH02846/AAH11006/AAH35850." evidence="14" ref="1 4 5 10">
    <original>D</original>
    <variation>G</variation>
    <location>
        <position position="5"/>
    </location>
</feature>
<feature type="sequence conflict" description="In Ref. 3; AAK69412." evidence="14" ref="3">
    <original>E</original>
    <variation>EP</variation>
    <location>
        <position position="33"/>
    </location>
</feature>
<feature type="sequence conflict" description="In Ref. 1; BAF80618." evidence="14" ref="1">
    <original>W</original>
    <variation>S</variation>
    <location>
        <position position="219"/>
    </location>
</feature>
<feature type="sequence conflict" description="In Ref. 3; AAK69412." evidence="14" ref="3">
    <original>T</original>
    <variation>A</variation>
    <location>
        <position position="221"/>
    </location>
</feature>
<protein>
    <recommendedName>
        <fullName>All-trans retinoic acid-induced differentiation factor</fullName>
    </recommendedName>
    <alternativeName>
        <fullName>Apoptosis-related protein 3</fullName>
        <shortName>APR-3</shortName>
    </alternativeName>
    <alternativeName>
        <fullName>p18</fullName>
    </alternativeName>
</protein>
<accession>Q6UW56</accession>
<accession>A8C1S2</accession>
<accession>A8K779</accession>
<accession>Q96FF6</accession>
<accession>Q96RT2</accession>
<accession>Q9Y2R7</accession>
<accession>Q9Y5L7</accession>
<reference key="1">
    <citation type="submission" date="1997-11" db="EMBL/GenBank/DDBJ databases">
        <title>Molecular cloning of a novel protein with four putative transmembrane domains.</title>
        <authorList>
            <person name="Mori K."/>
            <person name="Ogawa Y."/>
            <person name="Tashiro K."/>
            <person name="Ozaki S."/>
            <person name="Mukoyama M."/>
            <person name="Tanaka I."/>
            <person name="Nakao K."/>
        </authorList>
    </citation>
    <scope>NUCLEOTIDE SEQUENCE [MRNA] (ISOFORM 1)</scope>
    <scope>VARIANT SER-209</scope>
    <source>
        <tissue>Kidney</tissue>
    </source>
</reference>
<reference key="2">
    <citation type="journal article" date="2000" name="BioTechniques">
        <title>Improved PCR-based subtractive hybridization strategy for cloning differentially expressed genes.</title>
        <authorList>
            <person name="Zhu F."/>
            <person name="Yan W."/>
            <person name="Zhao Z.L."/>
            <person name="Chai Y.B."/>
            <person name="Lu F."/>
            <person name="Wang Q."/>
            <person name="Peng W.D."/>
            <person name="Yang A.G."/>
            <person name="Wang C.J."/>
        </authorList>
    </citation>
    <scope>NUCLEOTIDE SEQUENCE [MRNA] (ISOFORM 2)</scope>
</reference>
<reference key="3">
    <citation type="submission" date="2000-06" db="EMBL/GenBank/DDBJ databases">
        <title>Cloning and characterization of p18.</title>
        <authorList>
            <person name="Yang Y.C."/>
            <person name="Chen S.Y."/>
            <person name="Chang M.S."/>
        </authorList>
    </citation>
    <scope>NUCLEOTIDE SEQUENCE [MRNA] (ISOFORM 2)</scope>
</reference>
<reference key="4">
    <citation type="journal article" date="2000" name="Genome Res.">
        <title>Cloning and functional analysis of cDNAs with open reading frames for 300 previously undefined genes expressed in CD34+ hematopoietic stem/progenitor cells.</title>
        <authorList>
            <person name="Zhang Q.-H."/>
            <person name="Ye M."/>
            <person name="Wu X.-Y."/>
            <person name="Ren S.-X."/>
            <person name="Zhao M."/>
            <person name="Zhao C.-J."/>
            <person name="Fu G."/>
            <person name="Shen Y."/>
            <person name="Fan H.-Y."/>
            <person name="Lu G."/>
            <person name="Zhong M."/>
            <person name="Xu X.-R."/>
            <person name="Han Z.-G."/>
            <person name="Zhang J.-W."/>
            <person name="Tao J."/>
            <person name="Huang Q.-H."/>
            <person name="Zhou J."/>
            <person name="Hu G.-X."/>
            <person name="Gu J."/>
            <person name="Chen S.-J."/>
            <person name="Chen Z."/>
        </authorList>
    </citation>
    <scope>NUCLEOTIDE SEQUENCE [LARGE SCALE MRNA] (ISOFORM 1)</scope>
    <scope>TISSUE SPECIFICITY</scope>
    <source>
        <tissue>Umbilical cord blood</tissue>
    </source>
</reference>
<reference key="5">
    <citation type="journal article" date="2003" name="Genome Res.">
        <title>The secreted protein discovery initiative (SPDI), a large-scale effort to identify novel human secreted and transmembrane proteins: a bioinformatics assessment.</title>
        <authorList>
            <person name="Clark H.F."/>
            <person name="Gurney A.L."/>
            <person name="Abaya E."/>
            <person name="Baker K."/>
            <person name="Baldwin D.T."/>
            <person name="Brush J."/>
            <person name="Chen J."/>
            <person name="Chow B."/>
            <person name="Chui C."/>
            <person name="Crowley C."/>
            <person name="Currell B."/>
            <person name="Deuel B."/>
            <person name="Dowd P."/>
            <person name="Eaton D."/>
            <person name="Foster J.S."/>
            <person name="Grimaldi C."/>
            <person name="Gu Q."/>
            <person name="Hass P.E."/>
            <person name="Heldens S."/>
            <person name="Huang A."/>
            <person name="Kim H.S."/>
            <person name="Klimowski L."/>
            <person name="Jin Y."/>
            <person name="Johnson S."/>
            <person name="Lee J."/>
            <person name="Lewis L."/>
            <person name="Liao D."/>
            <person name="Mark M.R."/>
            <person name="Robbie E."/>
            <person name="Sanchez C."/>
            <person name="Schoenfeld J."/>
            <person name="Seshagiri S."/>
            <person name="Simmons L."/>
            <person name="Singh J."/>
            <person name="Smith V."/>
            <person name="Stinson J."/>
            <person name="Vagts A."/>
            <person name="Vandlen R.L."/>
            <person name="Watanabe C."/>
            <person name="Wieand D."/>
            <person name="Woods K."/>
            <person name="Xie M.-H."/>
            <person name="Yansura D.G."/>
            <person name="Yi S."/>
            <person name="Yu G."/>
            <person name="Yuan J."/>
            <person name="Zhang M."/>
            <person name="Zhang Z."/>
            <person name="Goddard A.D."/>
            <person name="Wood W.I."/>
            <person name="Godowski P.J."/>
            <person name="Gray A.M."/>
        </authorList>
    </citation>
    <scope>NUCLEOTIDE SEQUENCE [LARGE SCALE MRNA] (ISOFORM 1)</scope>
</reference>
<reference key="6">
    <citation type="journal article" date="2004" name="Nat. Genet.">
        <title>Complete sequencing and characterization of 21,243 full-length human cDNAs.</title>
        <authorList>
            <person name="Ota T."/>
            <person name="Suzuki Y."/>
            <person name="Nishikawa T."/>
            <person name="Otsuki T."/>
            <person name="Sugiyama T."/>
            <person name="Irie R."/>
            <person name="Wakamatsu A."/>
            <person name="Hayashi K."/>
            <person name="Sato H."/>
            <person name="Nagai K."/>
            <person name="Kimura K."/>
            <person name="Makita H."/>
            <person name="Sekine M."/>
            <person name="Obayashi M."/>
            <person name="Nishi T."/>
            <person name="Shibahara T."/>
            <person name="Tanaka T."/>
            <person name="Ishii S."/>
            <person name="Yamamoto J."/>
            <person name="Saito K."/>
            <person name="Kawai Y."/>
            <person name="Isono Y."/>
            <person name="Nakamura Y."/>
            <person name="Nagahari K."/>
            <person name="Murakami K."/>
            <person name="Yasuda T."/>
            <person name="Iwayanagi T."/>
            <person name="Wagatsuma M."/>
            <person name="Shiratori A."/>
            <person name="Sudo H."/>
            <person name="Hosoiri T."/>
            <person name="Kaku Y."/>
            <person name="Kodaira H."/>
            <person name="Kondo H."/>
            <person name="Sugawara M."/>
            <person name="Takahashi M."/>
            <person name="Kanda K."/>
            <person name="Yokoi T."/>
            <person name="Furuya T."/>
            <person name="Kikkawa E."/>
            <person name="Omura Y."/>
            <person name="Abe K."/>
            <person name="Kamihara K."/>
            <person name="Katsuta N."/>
            <person name="Sato K."/>
            <person name="Tanikawa M."/>
            <person name="Yamazaki M."/>
            <person name="Ninomiya K."/>
            <person name="Ishibashi T."/>
            <person name="Yamashita H."/>
            <person name="Murakawa K."/>
            <person name="Fujimori K."/>
            <person name="Tanai H."/>
            <person name="Kimata M."/>
            <person name="Watanabe M."/>
            <person name="Hiraoka S."/>
            <person name="Chiba Y."/>
            <person name="Ishida S."/>
            <person name="Ono Y."/>
            <person name="Takiguchi S."/>
            <person name="Watanabe S."/>
            <person name="Yosida M."/>
            <person name="Hotuta T."/>
            <person name="Kusano J."/>
            <person name="Kanehori K."/>
            <person name="Takahashi-Fujii A."/>
            <person name="Hara H."/>
            <person name="Tanase T.-O."/>
            <person name="Nomura Y."/>
            <person name="Togiya S."/>
            <person name="Komai F."/>
            <person name="Hara R."/>
            <person name="Takeuchi K."/>
            <person name="Arita M."/>
            <person name="Imose N."/>
            <person name="Musashino K."/>
            <person name="Yuuki H."/>
            <person name="Oshima A."/>
            <person name="Sasaki N."/>
            <person name="Aotsuka S."/>
            <person name="Yoshikawa Y."/>
            <person name="Matsunawa H."/>
            <person name="Ichihara T."/>
            <person name="Shiohata N."/>
            <person name="Sano S."/>
            <person name="Moriya S."/>
            <person name="Momiyama H."/>
            <person name="Satoh N."/>
            <person name="Takami S."/>
            <person name="Terashima Y."/>
            <person name="Suzuki O."/>
            <person name="Nakagawa S."/>
            <person name="Senoh A."/>
            <person name="Mizoguchi H."/>
            <person name="Goto Y."/>
            <person name="Shimizu F."/>
            <person name="Wakebe H."/>
            <person name="Hishigaki H."/>
            <person name="Watanabe T."/>
            <person name="Sugiyama A."/>
            <person name="Takemoto M."/>
            <person name="Kawakami B."/>
            <person name="Yamazaki M."/>
            <person name="Watanabe K."/>
            <person name="Kumagai A."/>
            <person name="Itakura S."/>
            <person name="Fukuzumi Y."/>
            <person name="Fujimori Y."/>
            <person name="Komiyama M."/>
            <person name="Tashiro H."/>
            <person name="Tanigami A."/>
            <person name="Fujiwara T."/>
            <person name="Ono T."/>
            <person name="Yamada K."/>
            <person name="Fujii Y."/>
            <person name="Ozaki K."/>
            <person name="Hirao M."/>
            <person name="Ohmori Y."/>
            <person name="Kawabata A."/>
            <person name="Hikiji T."/>
            <person name="Kobatake N."/>
            <person name="Inagaki H."/>
            <person name="Ikema Y."/>
            <person name="Okamoto S."/>
            <person name="Okitani R."/>
            <person name="Kawakami T."/>
            <person name="Noguchi S."/>
            <person name="Itoh T."/>
            <person name="Shigeta K."/>
            <person name="Senba T."/>
            <person name="Matsumura K."/>
            <person name="Nakajima Y."/>
            <person name="Mizuno T."/>
            <person name="Morinaga M."/>
            <person name="Sasaki M."/>
            <person name="Togashi T."/>
            <person name="Oyama M."/>
            <person name="Hata H."/>
            <person name="Watanabe M."/>
            <person name="Komatsu T."/>
            <person name="Mizushima-Sugano J."/>
            <person name="Satoh T."/>
            <person name="Shirai Y."/>
            <person name="Takahashi Y."/>
            <person name="Nakagawa K."/>
            <person name="Okumura K."/>
            <person name="Nagase T."/>
            <person name="Nomura N."/>
            <person name="Kikuchi H."/>
            <person name="Masuho Y."/>
            <person name="Yamashita R."/>
            <person name="Nakai K."/>
            <person name="Yada T."/>
            <person name="Nakamura Y."/>
            <person name="Ohara O."/>
            <person name="Isogai T."/>
            <person name="Sugano S."/>
        </authorList>
    </citation>
    <scope>NUCLEOTIDE SEQUENCE [LARGE SCALE MRNA] (ISOFORM 2)</scope>
    <source>
        <tissue>Skeletal muscle</tissue>
    </source>
</reference>
<reference key="7">
    <citation type="submission" date="2004-07" db="EMBL/GenBank/DDBJ databases">
        <title>Full-length cDNA libraries and normalization.</title>
        <authorList>
            <person name="Li W.B."/>
            <person name="Gruber C."/>
            <person name="Jessee J."/>
            <person name="Polayes D."/>
        </authorList>
    </citation>
    <scope>NUCLEOTIDE SEQUENCE [LARGE SCALE MRNA] (ISOFORM 3)</scope>
    <source>
        <tissue>Neuroblastoma</tissue>
    </source>
</reference>
<reference key="8">
    <citation type="journal article" date="2005" name="Nature">
        <title>Generation and annotation of the DNA sequences of human chromosomes 2 and 4.</title>
        <authorList>
            <person name="Hillier L.W."/>
            <person name="Graves T.A."/>
            <person name="Fulton R.S."/>
            <person name="Fulton L.A."/>
            <person name="Pepin K.H."/>
            <person name="Minx P."/>
            <person name="Wagner-McPherson C."/>
            <person name="Layman D."/>
            <person name="Wylie K."/>
            <person name="Sekhon M."/>
            <person name="Becker M.C."/>
            <person name="Fewell G.A."/>
            <person name="Delehaunty K.D."/>
            <person name="Miner T.L."/>
            <person name="Nash W.E."/>
            <person name="Kremitzki C."/>
            <person name="Oddy L."/>
            <person name="Du H."/>
            <person name="Sun H."/>
            <person name="Bradshaw-Cordum H."/>
            <person name="Ali J."/>
            <person name="Carter J."/>
            <person name="Cordes M."/>
            <person name="Harris A."/>
            <person name="Isak A."/>
            <person name="van Brunt A."/>
            <person name="Nguyen C."/>
            <person name="Du F."/>
            <person name="Courtney L."/>
            <person name="Kalicki J."/>
            <person name="Ozersky P."/>
            <person name="Abbott S."/>
            <person name="Armstrong J."/>
            <person name="Belter E.A."/>
            <person name="Caruso L."/>
            <person name="Cedroni M."/>
            <person name="Cotton M."/>
            <person name="Davidson T."/>
            <person name="Desai A."/>
            <person name="Elliott G."/>
            <person name="Erb T."/>
            <person name="Fronick C."/>
            <person name="Gaige T."/>
            <person name="Haakenson W."/>
            <person name="Haglund K."/>
            <person name="Holmes A."/>
            <person name="Harkins R."/>
            <person name="Kim K."/>
            <person name="Kruchowski S.S."/>
            <person name="Strong C.M."/>
            <person name="Grewal N."/>
            <person name="Goyea E."/>
            <person name="Hou S."/>
            <person name="Levy A."/>
            <person name="Martinka S."/>
            <person name="Mead K."/>
            <person name="McLellan M.D."/>
            <person name="Meyer R."/>
            <person name="Randall-Maher J."/>
            <person name="Tomlinson C."/>
            <person name="Dauphin-Kohlberg S."/>
            <person name="Kozlowicz-Reilly A."/>
            <person name="Shah N."/>
            <person name="Swearengen-Shahid S."/>
            <person name="Snider J."/>
            <person name="Strong J.T."/>
            <person name="Thompson J."/>
            <person name="Yoakum M."/>
            <person name="Leonard S."/>
            <person name="Pearman C."/>
            <person name="Trani L."/>
            <person name="Radionenko M."/>
            <person name="Waligorski J.E."/>
            <person name="Wang C."/>
            <person name="Rock S.M."/>
            <person name="Tin-Wollam A.-M."/>
            <person name="Maupin R."/>
            <person name="Latreille P."/>
            <person name="Wendl M.C."/>
            <person name="Yang S.-P."/>
            <person name="Pohl C."/>
            <person name="Wallis J.W."/>
            <person name="Spieth J."/>
            <person name="Bieri T.A."/>
            <person name="Berkowicz N."/>
            <person name="Nelson J.O."/>
            <person name="Osborne J."/>
            <person name="Ding L."/>
            <person name="Meyer R."/>
            <person name="Sabo A."/>
            <person name="Shotland Y."/>
            <person name="Sinha P."/>
            <person name="Wohldmann P.E."/>
            <person name="Cook L.L."/>
            <person name="Hickenbotham M.T."/>
            <person name="Eldred J."/>
            <person name="Williams D."/>
            <person name="Jones T.A."/>
            <person name="She X."/>
            <person name="Ciccarelli F.D."/>
            <person name="Izaurralde E."/>
            <person name="Taylor J."/>
            <person name="Schmutz J."/>
            <person name="Myers R.M."/>
            <person name="Cox D.R."/>
            <person name="Huang X."/>
            <person name="McPherson J.D."/>
            <person name="Mardis E.R."/>
            <person name="Clifton S.W."/>
            <person name="Warren W.C."/>
            <person name="Chinwalla A.T."/>
            <person name="Eddy S.R."/>
            <person name="Marra M.A."/>
            <person name="Ovcharenko I."/>
            <person name="Furey T.S."/>
            <person name="Miller W."/>
            <person name="Eichler E.E."/>
            <person name="Bork P."/>
            <person name="Suyama M."/>
            <person name="Torrents D."/>
            <person name="Waterston R.H."/>
            <person name="Wilson R.K."/>
        </authorList>
    </citation>
    <scope>NUCLEOTIDE SEQUENCE [LARGE SCALE GENOMIC DNA]</scope>
</reference>
<reference key="9">
    <citation type="submission" date="2005-09" db="EMBL/GenBank/DDBJ databases">
        <authorList>
            <person name="Mural R.J."/>
            <person name="Istrail S."/>
            <person name="Sutton G.G."/>
            <person name="Florea L."/>
            <person name="Halpern A.L."/>
            <person name="Mobarry C.M."/>
            <person name="Lippert R."/>
            <person name="Walenz B."/>
            <person name="Shatkay H."/>
            <person name="Dew I."/>
            <person name="Miller J.R."/>
            <person name="Flanigan M.J."/>
            <person name="Edwards N.J."/>
            <person name="Bolanos R."/>
            <person name="Fasulo D."/>
            <person name="Halldorsson B.V."/>
            <person name="Hannenhalli S."/>
            <person name="Turner R."/>
            <person name="Yooseph S."/>
            <person name="Lu F."/>
            <person name="Nusskern D.R."/>
            <person name="Shue B.C."/>
            <person name="Zheng X.H."/>
            <person name="Zhong F."/>
            <person name="Delcher A.L."/>
            <person name="Huson D.H."/>
            <person name="Kravitz S.A."/>
            <person name="Mouchard L."/>
            <person name="Reinert K."/>
            <person name="Remington K.A."/>
            <person name="Clark A.G."/>
            <person name="Waterman M.S."/>
            <person name="Eichler E.E."/>
            <person name="Adams M.D."/>
            <person name="Hunkapiller M.W."/>
            <person name="Myers E.W."/>
            <person name="Venter J.C."/>
        </authorList>
    </citation>
    <scope>NUCLEOTIDE SEQUENCE [LARGE SCALE GENOMIC DNA]</scope>
</reference>
<reference key="10">
    <citation type="journal article" date="2004" name="Genome Res.">
        <title>The status, quality, and expansion of the NIH full-length cDNA project: the Mammalian Gene Collection (MGC).</title>
        <authorList>
            <consortium name="The MGC Project Team"/>
        </authorList>
    </citation>
    <scope>NUCLEOTIDE SEQUENCE [LARGE SCALE MRNA] (ISOFORMS 1 AND 2)</scope>
    <source>
        <tissue>Brain</tissue>
        <tissue>Placenta</tissue>
        <tissue>Uterus</tissue>
    </source>
</reference>
<reference key="11">
    <citation type="journal article" date="2004" name="Protein Sci.">
        <title>Signal peptide prediction based on analysis of experimentally verified cleavage sites.</title>
        <authorList>
            <person name="Zhang Z."/>
            <person name="Henzel W.J."/>
        </authorList>
    </citation>
    <scope>PROTEIN SEQUENCE OF 31-45</scope>
</reference>
<reference key="12">
    <citation type="journal article" date="2007" name="Biochem. Biophys. Res. Commun.">
        <title>Apoptosis related protein 3, an ATRA-upregulated membrane protein arrests the cell cycle at G1/S phase by decreasing the expression of cyclin D1.</title>
        <authorList>
            <person name="Yu F."/>
            <person name="Yang G."/>
            <person name="Zhao Z."/>
            <person name="Ji L."/>
            <person name="Cao Y."/>
            <person name="Bai L."/>
            <person name="Lu F."/>
            <person name="Fu H."/>
            <person name="Huang B."/>
            <person name="Li H."/>
            <person name="Zhang J."/>
            <person name="Yao L."/>
            <person name="Lu Z."/>
        </authorList>
    </citation>
    <scope>INDUCTION</scope>
    <scope>SUBCELLULAR LOCATION</scope>
    <scope>POSSIBLE FUNCTION</scope>
</reference>
<reference key="13">
    <citation type="journal article" date="2007" name="Mol. Cell. Biochem.">
        <title>Identification of the distinct promoters for the two transcripts of apoptosis related protein 3 and their transcriptional regulation by NFAT and NFkappaB.</title>
        <authorList>
            <person name="Yang G."/>
            <person name="Yu F."/>
            <person name="Fu H."/>
            <person name="Lu F."/>
            <person name="Huang B."/>
            <person name="Bai L."/>
            <person name="Zhao Z."/>
            <person name="Yao L."/>
            <person name="Lu Z."/>
        </authorList>
    </citation>
    <scope>ALTERNATIVE PROMOTER USAGE</scope>
</reference>
<reference key="14">
    <citation type="journal article" date="2011" name="FEBS Lett.">
        <title>NELL-1 binds to APR3 affecting human osteoblast proliferation and differentiation.</title>
        <authorList>
            <person name="Zou X."/>
            <person name="Shen J."/>
            <person name="Chen F."/>
            <person name="Ting K."/>
            <person name="Zheng Z."/>
            <person name="Pang S."/>
            <person name="Zara J.N."/>
            <person name="Adams J.S."/>
            <person name="Soo C."/>
            <person name="Zhang X."/>
        </authorList>
    </citation>
    <scope>FUNCTION IN OSTEOBLAST DIFFERENTIATION</scope>
    <scope>INTERACTION WITH NELL1</scope>
    <scope>SUBCELLULAR LOCATION</scope>
</reference>
<reference key="15">
    <citation type="journal article" date="2018" name="Elife">
        <title>Identification of a transporter complex responsible for the cytosolic entry of nitrogen-containing bisphosphonates.</title>
        <authorList>
            <person name="Yu Z."/>
            <person name="Surface L.E."/>
            <person name="Park C.Y."/>
            <person name="Horlbeck M.A."/>
            <person name="Wyant G.A."/>
            <person name="Abu-Remaileh M."/>
            <person name="Peterson T.R."/>
            <person name="Sabatini D.M."/>
            <person name="Weissman J.S."/>
            <person name="O'Shea E.K."/>
        </authorList>
    </citation>
    <scope>FUNCTION</scope>
    <scope>SUBCELLULAR LOCATION</scope>
    <scope>INTERACTION WITH SLC37A3</scope>
</reference>